<proteinExistence type="inferred from homology"/>
<dbReference type="EMBL" id="CU928164">
    <property type="protein sequence ID" value="CAR19102.1"/>
    <property type="molecule type" value="Genomic_DNA"/>
</dbReference>
<dbReference type="RefSeq" id="WP_000999954.1">
    <property type="nucleotide sequence ID" value="NC_011750.1"/>
</dbReference>
<dbReference type="RefSeq" id="YP_002408911.1">
    <property type="nucleotide sequence ID" value="NC_011750.1"/>
</dbReference>
<dbReference type="SMR" id="B7NTD8"/>
<dbReference type="STRING" id="585057.ECIAI39_2983"/>
<dbReference type="KEGG" id="ect:ECIAI39_2983"/>
<dbReference type="PATRIC" id="fig|585057.6.peg.3095"/>
<dbReference type="HOGENOM" id="CLU_080880_3_0_6"/>
<dbReference type="Proteomes" id="UP000000749">
    <property type="component" value="Chromosome"/>
</dbReference>
<dbReference type="GO" id="GO:0005829">
    <property type="term" value="C:cytosol"/>
    <property type="evidence" value="ECO:0007669"/>
    <property type="project" value="TreeGrafter"/>
</dbReference>
<dbReference type="GO" id="GO:0008199">
    <property type="term" value="F:ferric iron binding"/>
    <property type="evidence" value="ECO:0007669"/>
    <property type="project" value="InterPro"/>
</dbReference>
<dbReference type="GO" id="GO:0008198">
    <property type="term" value="F:ferrous iron binding"/>
    <property type="evidence" value="ECO:0007669"/>
    <property type="project" value="TreeGrafter"/>
</dbReference>
<dbReference type="GO" id="GO:0016226">
    <property type="term" value="P:iron-sulfur cluster assembly"/>
    <property type="evidence" value="ECO:0007669"/>
    <property type="project" value="UniProtKB-UniRule"/>
</dbReference>
<dbReference type="CDD" id="cd00503">
    <property type="entry name" value="Frataxin"/>
    <property type="match status" value="1"/>
</dbReference>
<dbReference type="FunFam" id="3.30.920.10:FF:000001">
    <property type="entry name" value="Iron-sulfur cluster assembly protein CyaY"/>
    <property type="match status" value="1"/>
</dbReference>
<dbReference type="Gene3D" id="3.30.920.10">
    <property type="entry name" value="Frataxin/CyaY"/>
    <property type="match status" value="1"/>
</dbReference>
<dbReference type="HAMAP" id="MF_00142">
    <property type="entry name" value="CyaY"/>
    <property type="match status" value="1"/>
</dbReference>
<dbReference type="InterPro" id="IPR047584">
    <property type="entry name" value="CyaY"/>
</dbReference>
<dbReference type="InterPro" id="IPR002908">
    <property type="entry name" value="Frataxin/CyaY"/>
</dbReference>
<dbReference type="InterPro" id="IPR036524">
    <property type="entry name" value="Frataxin/CyaY_sf"/>
</dbReference>
<dbReference type="InterPro" id="IPR020895">
    <property type="entry name" value="Frataxin_CS"/>
</dbReference>
<dbReference type="NCBIfam" id="TIGR03421">
    <property type="entry name" value="FeS_CyaY"/>
    <property type="match status" value="1"/>
</dbReference>
<dbReference type="PANTHER" id="PTHR16821">
    <property type="entry name" value="FRATAXIN"/>
    <property type="match status" value="1"/>
</dbReference>
<dbReference type="PANTHER" id="PTHR16821:SF2">
    <property type="entry name" value="FRATAXIN, MITOCHONDRIAL"/>
    <property type="match status" value="1"/>
</dbReference>
<dbReference type="Pfam" id="PF01491">
    <property type="entry name" value="Frataxin_Cyay"/>
    <property type="match status" value="1"/>
</dbReference>
<dbReference type="SMART" id="SM01219">
    <property type="entry name" value="Frataxin_Cyay"/>
    <property type="match status" value="1"/>
</dbReference>
<dbReference type="SUPFAM" id="SSF55387">
    <property type="entry name" value="Frataxin/Nqo15-like"/>
    <property type="match status" value="1"/>
</dbReference>
<dbReference type="PROSITE" id="PS01344">
    <property type="entry name" value="FRATAXIN_1"/>
    <property type="match status" value="1"/>
</dbReference>
<dbReference type="PROSITE" id="PS50810">
    <property type="entry name" value="FRATAXIN_2"/>
    <property type="match status" value="1"/>
</dbReference>
<comment type="function">
    <text evidence="1">Involved in iron-sulfur (Fe-S) cluster assembly. May act as a regulator of Fe-S biogenesis.</text>
</comment>
<comment type="similarity">
    <text evidence="1">Belongs to the frataxin family.</text>
</comment>
<keyword id="KW-0408">Iron</keyword>
<keyword id="KW-0479">Metal-binding</keyword>
<accession>B7NTD8</accession>
<reference key="1">
    <citation type="journal article" date="2009" name="PLoS Genet.">
        <title>Organised genome dynamics in the Escherichia coli species results in highly diverse adaptive paths.</title>
        <authorList>
            <person name="Touchon M."/>
            <person name="Hoede C."/>
            <person name="Tenaillon O."/>
            <person name="Barbe V."/>
            <person name="Baeriswyl S."/>
            <person name="Bidet P."/>
            <person name="Bingen E."/>
            <person name="Bonacorsi S."/>
            <person name="Bouchier C."/>
            <person name="Bouvet O."/>
            <person name="Calteau A."/>
            <person name="Chiapello H."/>
            <person name="Clermont O."/>
            <person name="Cruveiller S."/>
            <person name="Danchin A."/>
            <person name="Diard M."/>
            <person name="Dossat C."/>
            <person name="Karoui M.E."/>
            <person name="Frapy E."/>
            <person name="Garry L."/>
            <person name="Ghigo J.M."/>
            <person name="Gilles A.M."/>
            <person name="Johnson J."/>
            <person name="Le Bouguenec C."/>
            <person name="Lescat M."/>
            <person name="Mangenot S."/>
            <person name="Martinez-Jehanne V."/>
            <person name="Matic I."/>
            <person name="Nassif X."/>
            <person name="Oztas S."/>
            <person name="Petit M.A."/>
            <person name="Pichon C."/>
            <person name="Rouy Z."/>
            <person name="Ruf C.S."/>
            <person name="Schneider D."/>
            <person name="Tourret J."/>
            <person name="Vacherie B."/>
            <person name="Vallenet D."/>
            <person name="Medigue C."/>
            <person name="Rocha E.P.C."/>
            <person name="Denamur E."/>
        </authorList>
    </citation>
    <scope>NUCLEOTIDE SEQUENCE [LARGE SCALE GENOMIC DNA]</scope>
    <source>
        <strain>IAI39 / ExPEC</strain>
    </source>
</reference>
<evidence type="ECO:0000255" key="1">
    <source>
        <dbReference type="HAMAP-Rule" id="MF_00142"/>
    </source>
</evidence>
<protein>
    <recommendedName>
        <fullName evidence="1">Iron-sulfur cluster assembly protein CyaY</fullName>
    </recommendedName>
</protein>
<sequence length="106" mass="12259">MNDSEFHRLADQLWLTIEERLDDWDGDSDIDCEINGGVLTITFENGSKIIINRQEPLHQVWLATRQGGYHFDLKGDEWICDRSGETFWDLLEQAATQQAGETVSFR</sequence>
<gene>
    <name evidence="1" type="primary">cyaY</name>
    <name type="ordered locus">ECIAI39_2983</name>
</gene>
<feature type="chain" id="PRO_1000190056" description="Iron-sulfur cluster assembly protein CyaY">
    <location>
        <begin position="1"/>
        <end position="106"/>
    </location>
</feature>
<organism>
    <name type="scientific">Escherichia coli O7:K1 (strain IAI39 / ExPEC)</name>
    <dbReference type="NCBI Taxonomy" id="585057"/>
    <lineage>
        <taxon>Bacteria</taxon>
        <taxon>Pseudomonadati</taxon>
        <taxon>Pseudomonadota</taxon>
        <taxon>Gammaproteobacteria</taxon>
        <taxon>Enterobacterales</taxon>
        <taxon>Enterobacteriaceae</taxon>
        <taxon>Escherichia</taxon>
    </lineage>
</organism>
<name>CYAY_ECO7I</name>